<accession>A9L0Z2</accession>
<dbReference type="EMBL" id="CP000891">
    <property type="protein sequence ID" value="ABX47891.1"/>
    <property type="molecule type" value="Genomic_DNA"/>
</dbReference>
<dbReference type="SMR" id="A9L0Z2"/>
<dbReference type="KEGG" id="sbn:Sbal195_0713"/>
<dbReference type="HOGENOM" id="CLU_059558_1_1_6"/>
<dbReference type="Proteomes" id="UP000000770">
    <property type="component" value="Chromosome"/>
</dbReference>
<dbReference type="GO" id="GO:0005524">
    <property type="term" value="F:ATP binding"/>
    <property type="evidence" value="ECO:0007669"/>
    <property type="project" value="UniProtKB-UniRule"/>
</dbReference>
<dbReference type="GO" id="GO:0005525">
    <property type="term" value="F:GTP binding"/>
    <property type="evidence" value="ECO:0007669"/>
    <property type="project" value="UniProtKB-UniRule"/>
</dbReference>
<dbReference type="HAMAP" id="MF_00636">
    <property type="entry name" value="RapZ_like"/>
    <property type="match status" value="1"/>
</dbReference>
<dbReference type="InterPro" id="IPR027417">
    <property type="entry name" value="P-loop_NTPase"/>
</dbReference>
<dbReference type="InterPro" id="IPR005337">
    <property type="entry name" value="RapZ-like"/>
</dbReference>
<dbReference type="InterPro" id="IPR053930">
    <property type="entry name" value="RapZ-like_N"/>
</dbReference>
<dbReference type="InterPro" id="IPR053931">
    <property type="entry name" value="RapZ_C"/>
</dbReference>
<dbReference type="NCBIfam" id="NF003828">
    <property type="entry name" value="PRK05416.1"/>
    <property type="match status" value="1"/>
</dbReference>
<dbReference type="PANTHER" id="PTHR30448">
    <property type="entry name" value="RNASE ADAPTER PROTEIN RAPZ"/>
    <property type="match status" value="1"/>
</dbReference>
<dbReference type="PANTHER" id="PTHR30448:SF0">
    <property type="entry name" value="RNASE ADAPTER PROTEIN RAPZ"/>
    <property type="match status" value="1"/>
</dbReference>
<dbReference type="Pfam" id="PF22740">
    <property type="entry name" value="PapZ_C"/>
    <property type="match status" value="1"/>
</dbReference>
<dbReference type="Pfam" id="PF03668">
    <property type="entry name" value="RapZ-like_N"/>
    <property type="match status" value="1"/>
</dbReference>
<dbReference type="PIRSF" id="PIRSF005052">
    <property type="entry name" value="P-loopkin"/>
    <property type="match status" value="1"/>
</dbReference>
<dbReference type="SUPFAM" id="SSF52540">
    <property type="entry name" value="P-loop containing nucleoside triphosphate hydrolases"/>
    <property type="match status" value="1"/>
</dbReference>
<keyword id="KW-0067">ATP-binding</keyword>
<keyword id="KW-0342">GTP-binding</keyword>
<keyword id="KW-0547">Nucleotide-binding</keyword>
<reference key="1">
    <citation type="submission" date="2007-11" db="EMBL/GenBank/DDBJ databases">
        <title>Complete sequence of chromosome of Shewanella baltica OS195.</title>
        <authorList>
            <consortium name="US DOE Joint Genome Institute"/>
            <person name="Copeland A."/>
            <person name="Lucas S."/>
            <person name="Lapidus A."/>
            <person name="Barry K."/>
            <person name="Glavina del Rio T."/>
            <person name="Dalin E."/>
            <person name="Tice H."/>
            <person name="Pitluck S."/>
            <person name="Chain P."/>
            <person name="Malfatti S."/>
            <person name="Shin M."/>
            <person name="Vergez L."/>
            <person name="Schmutz J."/>
            <person name="Larimer F."/>
            <person name="Land M."/>
            <person name="Hauser L."/>
            <person name="Kyrpides N."/>
            <person name="Kim E."/>
            <person name="Brettar I."/>
            <person name="Rodrigues J."/>
            <person name="Konstantinidis K."/>
            <person name="Klappenbach J."/>
            <person name="Hofle M."/>
            <person name="Tiedje J."/>
            <person name="Richardson P."/>
        </authorList>
    </citation>
    <scope>NUCLEOTIDE SEQUENCE [LARGE SCALE GENOMIC DNA]</scope>
    <source>
        <strain>OS195</strain>
    </source>
</reference>
<evidence type="ECO:0000255" key="1">
    <source>
        <dbReference type="HAMAP-Rule" id="MF_00636"/>
    </source>
</evidence>
<gene>
    <name type="ordered locus">Sbal195_0713</name>
</gene>
<comment type="function">
    <text evidence="1">Displays ATPase and GTPase activities.</text>
</comment>
<comment type="similarity">
    <text evidence="1">Belongs to the RapZ-like family.</text>
</comment>
<feature type="chain" id="PRO_1000082664" description="Nucleotide-binding protein Sbal195_0713">
    <location>
        <begin position="1"/>
        <end position="284"/>
    </location>
</feature>
<feature type="binding site" evidence="1">
    <location>
        <begin position="8"/>
        <end position="15"/>
    </location>
    <ligand>
        <name>ATP</name>
        <dbReference type="ChEBI" id="CHEBI:30616"/>
    </ligand>
</feature>
<feature type="binding site" evidence="1">
    <location>
        <begin position="56"/>
        <end position="59"/>
    </location>
    <ligand>
        <name>GTP</name>
        <dbReference type="ChEBI" id="CHEBI:37565"/>
    </ligand>
</feature>
<protein>
    <recommendedName>
        <fullName evidence="1">Nucleotide-binding protein Sbal195_0713</fullName>
    </recommendedName>
</protein>
<organism>
    <name type="scientific">Shewanella baltica (strain OS195)</name>
    <dbReference type="NCBI Taxonomy" id="399599"/>
    <lineage>
        <taxon>Bacteria</taxon>
        <taxon>Pseudomonadati</taxon>
        <taxon>Pseudomonadota</taxon>
        <taxon>Gammaproteobacteria</taxon>
        <taxon>Alteromonadales</taxon>
        <taxon>Shewanellaceae</taxon>
        <taxon>Shewanella</taxon>
    </lineage>
</organism>
<sequence>MKLVIVSGRSGSGKSVALRVLEDLGYYCVDNLPLPLIGTLLEQLKGSNDLVAISVDVRNLPEQDKVLVKQLASLPPDTELTSFFLNSSDKILLKRYSETRRLHPLSKSQVSLQEAIKLEGKLLEPMSKLVDHYIDTSNLNIYDLSDQVRQILLGSVDKELVINFESFGFKHGMPTEADFMFDVRFLPNPHWELALRPLTGLDEPVAEFLNRQPLVNKFIWQIENLLETWLPHLERNNRSYLTVAIGCTGGQHRSVYVAEQLAKRFSNGKHKVYARHRELNNAKA</sequence>
<proteinExistence type="inferred from homology"/>
<name>Y713_SHEB9</name>